<organism>
    <name type="scientific">Vibrio cholerae serotype O1 (strain ATCC 39541 / Classical Ogawa 395 / O395)</name>
    <dbReference type="NCBI Taxonomy" id="345073"/>
    <lineage>
        <taxon>Bacteria</taxon>
        <taxon>Pseudomonadati</taxon>
        <taxon>Pseudomonadota</taxon>
        <taxon>Gammaproteobacteria</taxon>
        <taxon>Vibrionales</taxon>
        <taxon>Vibrionaceae</taxon>
        <taxon>Vibrio</taxon>
    </lineage>
</organism>
<feature type="chain" id="PRO_1000071655" description="Cytosol aminopeptidase">
    <location>
        <begin position="1"/>
        <end position="503"/>
    </location>
</feature>
<feature type="active site" evidence="1">
    <location>
        <position position="281"/>
    </location>
</feature>
<feature type="active site" evidence="1">
    <location>
        <position position="355"/>
    </location>
</feature>
<feature type="binding site" evidence="1">
    <location>
        <position position="269"/>
    </location>
    <ligand>
        <name>Mn(2+)</name>
        <dbReference type="ChEBI" id="CHEBI:29035"/>
        <label>2</label>
    </ligand>
</feature>
<feature type="binding site" evidence="1">
    <location>
        <position position="274"/>
    </location>
    <ligand>
        <name>Mn(2+)</name>
        <dbReference type="ChEBI" id="CHEBI:29035"/>
        <label>1</label>
    </ligand>
</feature>
<feature type="binding site" evidence="1">
    <location>
        <position position="274"/>
    </location>
    <ligand>
        <name>Mn(2+)</name>
        <dbReference type="ChEBI" id="CHEBI:29035"/>
        <label>2</label>
    </ligand>
</feature>
<feature type="binding site" evidence="1">
    <location>
        <position position="292"/>
    </location>
    <ligand>
        <name>Mn(2+)</name>
        <dbReference type="ChEBI" id="CHEBI:29035"/>
        <label>2</label>
    </ligand>
</feature>
<feature type="binding site" evidence="1">
    <location>
        <position position="351"/>
    </location>
    <ligand>
        <name>Mn(2+)</name>
        <dbReference type="ChEBI" id="CHEBI:29035"/>
        <label>1</label>
    </ligand>
</feature>
<feature type="binding site" evidence="1">
    <location>
        <position position="353"/>
    </location>
    <ligand>
        <name>Mn(2+)</name>
        <dbReference type="ChEBI" id="CHEBI:29035"/>
        <label>1</label>
    </ligand>
</feature>
<feature type="binding site" evidence="1">
    <location>
        <position position="353"/>
    </location>
    <ligand>
        <name>Mn(2+)</name>
        <dbReference type="ChEBI" id="CHEBI:29035"/>
        <label>2</label>
    </ligand>
</feature>
<accession>A5F5D8</accession>
<accession>C3M4Z0</accession>
<accession>Q9K2W5</accession>
<evidence type="ECO:0000255" key="1">
    <source>
        <dbReference type="HAMAP-Rule" id="MF_00181"/>
    </source>
</evidence>
<reference key="1">
    <citation type="submission" date="2000-06" db="EMBL/GenBank/DDBJ databases">
        <title>Identification and characterization of pepA, a gene mediating pH regulation of virulence genes in Vibrio cholerae.</title>
        <authorList>
            <person name="Behari J."/>
            <person name="Stagon L."/>
            <person name="Calderwood S.B."/>
        </authorList>
    </citation>
    <scope>NUCLEOTIDE SEQUENCE [GENOMIC DNA]</scope>
</reference>
<reference key="2">
    <citation type="submission" date="2007-03" db="EMBL/GenBank/DDBJ databases">
        <authorList>
            <person name="Heidelberg J."/>
        </authorList>
    </citation>
    <scope>NUCLEOTIDE SEQUENCE [LARGE SCALE GENOMIC DNA]</scope>
    <source>
        <strain>ATCC 39541 / Classical Ogawa 395 / O395</strain>
    </source>
</reference>
<reference key="3">
    <citation type="journal article" date="2008" name="PLoS ONE">
        <title>A recalibrated molecular clock and independent origins for the cholera pandemic clones.</title>
        <authorList>
            <person name="Feng L."/>
            <person name="Reeves P.R."/>
            <person name="Lan R."/>
            <person name="Ren Y."/>
            <person name="Gao C."/>
            <person name="Zhou Z."/>
            <person name="Ren Y."/>
            <person name="Cheng J."/>
            <person name="Wang W."/>
            <person name="Wang J."/>
            <person name="Qian W."/>
            <person name="Li D."/>
            <person name="Wang L."/>
        </authorList>
    </citation>
    <scope>NUCLEOTIDE SEQUENCE [LARGE SCALE GENOMIC DNA]</scope>
    <source>
        <strain>ATCC 39541 / Classical Ogawa 395 / O395</strain>
    </source>
</reference>
<name>AMPA_VIBC3</name>
<comment type="function">
    <text evidence="1">Presumably involved in the processing and regular turnover of intracellular proteins. Catalyzes the removal of unsubstituted N-terminal amino acids from various peptides.</text>
</comment>
<comment type="catalytic activity">
    <reaction evidence="1">
        <text>Release of an N-terminal amino acid, Xaa-|-Yaa-, in which Xaa is preferably Leu, but may be other amino acids including Pro although not Arg or Lys, and Yaa may be Pro. Amino acid amides and methyl esters are also readily hydrolyzed, but rates on arylamides are exceedingly low.</text>
        <dbReference type="EC" id="3.4.11.1"/>
    </reaction>
</comment>
<comment type="catalytic activity">
    <reaction evidence="1">
        <text>Release of an N-terminal amino acid, preferentially leucine, but not glutamic or aspartic acids.</text>
        <dbReference type="EC" id="3.4.11.10"/>
    </reaction>
</comment>
<comment type="cofactor">
    <cofactor evidence="1">
        <name>Mn(2+)</name>
        <dbReference type="ChEBI" id="CHEBI:29035"/>
    </cofactor>
    <text evidence="1">Binds 2 manganese ions per subunit.</text>
</comment>
<comment type="subcellular location">
    <subcellularLocation>
        <location evidence="1">Cytoplasm</location>
    </subcellularLocation>
</comment>
<comment type="similarity">
    <text evidence="1">Belongs to the peptidase M17 family.</text>
</comment>
<dbReference type="EC" id="3.4.11.1" evidence="1"/>
<dbReference type="EC" id="3.4.11.10" evidence="1"/>
<dbReference type="EMBL" id="AF282267">
    <property type="protein sequence ID" value="AAF91462.1"/>
    <property type="molecule type" value="Genomic_DNA"/>
</dbReference>
<dbReference type="EMBL" id="CP000627">
    <property type="protein sequence ID" value="ABQ21946.1"/>
    <property type="molecule type" value="Genomic_DNA"/>
</dbReference>
<dbReference type="EMBL" id="CP001235">
    <property type="protein sequence ID" value="ACP10601.1"/>
    <property type="molecule type" value="Genomic_DNA"/>
</dbReference>
<dbReference type="RefSeq" id="WP_000397172.1">
    <property type="nucleotide sequence ID" value="NZ_JAACZH010000021.1"/>
</dbReference>
<dbReference type="SMR" id="A5F5D8"/>
<dbReference type="MEROPS" id="M17.003"/>
<dbReference type="GeneID" id="88785064"/>
<dbReference type="KEGG" id="vco:VC0395_A2083"/>
<dbReference type="KEGG" id="vcr:VC395_2615"/>
<dbReference type="PATRIC" id="fig|345073.21.peg.2517"/>
<dbReference type="eggNOG" id="COG0260">
    <property type="taxonomic scope" value="Bacteria"/>
</dbReference>
<dbReference type="HOGENOM" id="CLU_013734_2_2_6"/>
<dbReference type="OrthoDB" id="9809354at2"/>
<dbReference type="Proteomes" id="UP000000249">
    <property type="component" value="Chromosome 2"/>
</dbReference>
<dbReference type="GO" id="GO:0005737">
    <property type="term" value="C:cytoplasm"/>
    <property type="evidence" value="ECO:0007669"/>
    <property type="project" value="UniProtKB-SubCell"/>
</dbReference>
<dbReference type="GO" id="GO:0030145">
    <property type="term" value="F:manganese ion binding"/>
    <property type="evidence" value="ECO:0007669"/>
    <property type="project" value="UniProtKB-UniRule"/>
</dbReference>
<dbReference type="GO" id="GO:0070006">
    <property type="term" value="F:metalloaminopeptidase activity"/>
    <property type="evidence" value="ECO:0007669"/>
    <property type="project" value="InterPro"/>
</dbReference>
<dbReference type="GO" id="GO:0006508">
    <property type="term" value="P:proteolysis"/>
    <property type="evidence" value="ECO:0007669"/>
    <property type="project" value="UniProtKB-KW"/>
</dbReference>
<dbReference type="CDD" id="cd00433">
    <property type="entry name" value="Peptidase_M17"/>
    <property type="match status" value="1"/>
</dbReference>
<dbReference type="FunFam" id="3.40.220.10:FF:000001">
    <property type="entry name" value="Probable cytosol aminopeptidase"/>
    <property type="match status" value="1"/>
</dbReference>
<dbReference type="FunFam" id="3.40.630.10:FF:000004">
    <property type="entry name" value="Probable cytosol aminopeptidase"/>
    <property type="match status" value="1"/>
</dbReference>
<dbReference type="Gene3D" id="3.40.220.10">
    <property type="entry name" value="Leucine Aminopeptidase, subunit E, domain 1"/>
    <property type="match status" value="1"/>
</dbReference>
<dbReference type="Gene3D" id="3.40.630.10">
    <property type="entry name" value="Zn peptidases"/>
    <property type="match status" value="1"/>
</dbReference>
<dbReference type="HAMAP" id="MF_00181">
    <property type="entry name" value="Cytosol_peptidase_M17"/>
    <property type="match status" value="1"/>
</dbReference>
<dbReference type="InterPro" id="IPR011356">
    <property type="entry name" value="Leucine_aapep/pepB"/>
</dbReference>
<dbReference type="InterPro" id="IPR043472">
    <property type="entry name" value="Macro_dom-like"/>
</dbReference>
<dbReference type="InterPro" id="IPR000819">
    <property type="entry name" value="Peptidase_M17_C"/>
</dbReference>
<dbReference type="InterPro" id="IPR023042">
    <property type="entry name" value="Peptidase_M17_leu_NH2_pept"/>
</dbReference>
<dbReference type="InterPro" id="IPR008283">
    <property type="entry name" value="Peptidase_M17_N"/>
</dbReference>
<dbReference type="NCBIfam" id="NF002072">
    <property type="entry name" value="PRK00913.1-1"/>
    <property type="match status" value="1"/>
</dbReference>
<dbReference type="NCBIfam" id="NF002074">
    <property type="entry name" value="PRK00913.1-4"/>
    <property type="match status" value="1"/>
</dbReference>
<dbReference type="PANTHER" id="PTHR11963:SF23">
    <property type="entry name" value="CYTOSOL AMINOPEPTIDASE"/>
    <property type="match status" value="1"/>
</dbReference>
<dbReference type="PANTHER" id="PTHR11963">
    <property type="entry name" value="LEUCINE AMINOPEPTIDASE-RELATED"/>
    <property type="match status" value="1"/>
</dbReference>
<dbReference type="Pfam" id="PF00883">
    <property type="entry name" value="Peptidase_M17"/>
    <property type="match status" value="1"/>
</dbReference>
<dbReference type="Pfam" id="PF02789">
    <property type="entry name" value="Peptidase_M17_N"/>
    <property type="match status" value="1"/>
</dbReference>
<dbReference type="PRINTS" id="PR00481">
    <property type="entry name" value="LAMNOPPTDASE"/>
</dbReference>
<dbReference type="SUPFAM" id="SSF52949">
    <property type="entry name" value="Macro domain-like"/>
    <property type="match status" value="1"/>
</dbReference>
<dbReference type="SUPFAM" id="SSF53187">
    <property type="entry name" value="Zn-dependent exopeptidases"/>
    <property type="match status" value="1"/>
</dbReference>
<dbReference type="PROSITE" id="PS00631">
    <property type="entry name" value="CYTOSOL_AP"/>
    <property type="match status" value="1"/>
</dbReference>
<keyword id="KW-0031">Aminopeptidase</keyword>
<keyword id="KW-0963">Cytoplasm</keyword>
<keyword id="KW-0378">Hydrolase</keyword>
<keyword id="KW-0464">Manganese</keyword>
<keyword id="KW-0479">Metal-binding</keyword>
<keyword id="KW-0645">Protease</keyword>
<sequence length="503" mass="54618">MEFSVKSGSPEKQRSACIVVGVFEPRRLSPVAEQLDKISDGYISSLLRRGDLEGKPGQMLLLHQVPGVLSERVLLVGCGKERELGERQYKEIIQKTINTLNETGSMEAVCFLTELHVKGRDTYWKVRQAVEATKDGLYIFDQFKSVKPEIRRPLRKLVFNVPTRRELNLGERAITHGLAISSGVKACKDLGNMPPNIANPAYLASQARRLADDYESITTKIIGEEEMEKLGMASYLAVGRGSRNESMMSVIEYKGNPDPEAKPIVLVGKGLTFDSGGISLKPGEGMDEMKYDMCGAASVFGTMKAIAKLGLPLNVIGVLAGCENMPGSNAYRPGDILTTMSGQTVEVLNTDAEGRLVLCDVLTYVERFEPECVVDVATLTGACVIALGHHISAVMSNHNPLAHELVNASEQSSDRAWRLPLADEYHEQLKSPFADMANIGGRPGGAITAACFLSKFAKKYNWAHLDIAGTAWKSGAAKGSTGRPVSLLVQFLLNRSGGLDAEE</sequence>
<proteinExistence type="inferred from homology"/>
<gene>
    <name evidence="1" type="primary">pepA</name>
    <name type="ordered locus">VC0395_A2083</name>
    <name type="ordered locus">VC395_2615</name>
</gene>
<protein>
    <recommendedName>
        <fullName>Cytosol aminopeptidase</fullName>
        <ecNumber evidence="1">3.4.11.1</ecNumber>
    </recommendedName>
    <alternativeName>
        <fullName evidence="1">Leucine aminopeptidase</fullName>
        <shortName evidence="1">LAP</shortName>
        <ecNumber evidence="1">3.4.11.10</ecNumber>
    </alternativeName>
    <alternativeName>
        <fullName evidence="1">Leucyl aminopeptidase</fullName>
    </alternativeName>
</protein>